<proteinExistence type="inferred from homology"/>
<name>CH60_CLOB6</name>
<evidence type="ECO:0000255" key="1">
    <source>
        <dbReference type="HAMAP-Rule" id="MF_00600"/>
    </source>
</evidence>
<sequence length="541" mass="57936">MAKSLLFGEQARRSMEAGVDKLADTVRVTLGPKGRNVVLDKKFGSPLITNDGVTIAREIELEDPYENMGAQLVKEVATKTNDVAGDGTTTATLLAQAIIREGLKNVTAGANPIQIRTGIRKAVEKAVEEIKVISKPVNGKEDIARVAAISAASEEVGKLIADAMERVGNDGVITVEESKSMGTDLEVVEGMQFDRGYVSAYMVTDTEKMEAVLDDVYILITDKKISNIQEILPILEQIVQQGKKLLIISEDIEGEALSTLVLNKLRGTFTCVGVKAPGFGDRRKEMLQDIAILTGGEVISEELGRDLKDVTIDMLGTADSVKVTKENTTIVNGKGDKVAIKERVSQIRVQIEDTTSEFDKEKLQERLAKLAGGVAVIRVGAATETELKEEKLRIEDALAATKAAVEEGIVPGGGTAYIDIIPKIADLTSDIIDVKLGIDIIRKALEEPVRQIANNAGVEGSVIIEKVKASEAGVGYDALNDKYVDMLKTGIVDPTKVTRSALQNAASIASTFLTTEAAVADIPEKENTPPMAPGMGMDGMY</sequence>
<comment type="function">
    <text evidence="1">Together with its co-chaperonin GroES, plays an essential role in assisting protein folding. The GroEL-GroES system forms a nano-cage that allows encapsulation of the non-native substrate proteins and provides a physical environment optimized to promote and accelerate protein folding.</text>
</comment>
<comment type="catalytic activity">
    <reaction evidence="1">
        <text>ATP + H2O + a folded polypeptide = ADP + phosphate + an unfolded polypeptide.</text>
        <dbReference type="EC" id="5.6.1.7"/>
    </reaction>
</comment>
<comment type="subunit">
    <text evidence="1">Forms a cylinder of 14 subunits composed of two heptameric rings stacked back-to-back. Interacts with the co-chaperonin GroES.</text>
</comment>
<comment type="subcellular location">
    <subcellularLocation>
        <location evidence="1">Cytoplasm</location>
    </subcellularLocation>
</comment>
<comment type="similarity">
    <text evidence="1">Belongs to the chaperonin (HSP60) family.</text>
</comment>
<feature type="chain" id="PRO_1000212192" description="Chaperonin GroEL">
    <location>
        <begin position="1"/>
        <end position="541"/>
    </location>
</feature>
<feature type="binding site" evidence="1">
    <location>
        <begin position="29"/>
        <end position="32"/>
    </location>
    <ligand>
        <name>ATP</name>
        <dbReference type="ChEBI" id="CHEBI:30616"/>
    </ligand>
</feature>
<feature type="binding site" evidence="1">
    <location>
        <begin position="86"/>
        <end position="90"/>
    </location>
    <ligand>
        <name>ATP</name>
        <dbReference type="ChEBI" id="CHEBI:30616"/>
    </ligand>
</feature>
<feature type="binding site" evidence="1">
    <location>
        <position position="413"/>
    </location>
    <ligand>
        <name>ATP</name>
        <dbReference type="ChEBI" id="CHEBI:30616"/>
    </ligand>
</feature>
<feature type="binding site" evidence="1">
    <location>
        <begin position="477"/>
        <end position="479"/>
    </location>
    <ligand>
        <name>ATP</name>
        <dbReference type="ChEBI" id="CHEBI:30616"/>
    </ligand>
</feature>
<feature type="binding site" evidence="1">
    <location>
        <position position="493"/>
    </location>
    <ligand>
        <name>ATP</name>
        <dbReference type="ChEBI" id="CHEBI:30616"/>
    </ligand>
</feature>
<accession>C3KUC8</accession>
<protein>
    <recommendedName>
        <fullName evidence="1">Chaperonin GroEL</fullName>
        <ecNumber evidence="1">5.6.1.7</ecNumber>
    </recommendedName>
    <alternativeName>
        <fullName evidence="1">60 kDa chaperonin</fullName>
    </alternativeName>
    <alternativeName>
        <fullName evidence="1">Chaperonin-60</fullName>
        <shortName evidence="1">Cpn60</shortName>
    </alternativeName>
</protein>
<organism>
    <name type="scientific">Clostridium botulinum (strain 657 / Type Ba4)</name>
    <dbReference type="NCBI Taxonomy" id="515621"/>
    <lineage>
        <taxon>Bacteria</taxon>
        <taxon>Bacillati</taxon>
        <taxon>Bacillota</taxon>
        <taxon>Clostridia</taxon>
        <taxon>Eubacteriales</taxon>
        <taxon>Clostridiaceae</taxon>
        <taxon>Clostridium</taxon>
    </lineage>
</organism>
<reference key="1">
    <citation type="submission" date="2008-05" db="EMBL/GenBank/DDBJ databases">
        <title>Genome sequence of Clostridium botulinum Ba4 strain 657.</title>
        <authorList>
            <person name="Shrivastava S."/>
            <person name="Brown J.L."/>
            <person name="Bruce D."/>
            <person name="Detter C."/>
            <person name="Munk C."/>
            <person name="Smith L.A."/>
            <person name="Smith T.J."/>
            <person name="Sutton G."/>
            <person name="Brettin T.S."/>
        </authorList>
    </citation>
    <scope>NUCLEOTIDE SEQUENCE [LARGE SCALE GENOMIC DNA]</scope>
    <source>
        <strain>657 / Type Ba4</strain>
    </source>
</reference>
<keyword id="KW-0067">ATP-binding</keyword>
<keyword id="KW-0143">Chaperone</keyword>
<keyword id="KW-0963">Cytoplasm</keyword>
<keyword id="KW-0413">Isomerase</keyword>
<keyword id="KW-0547">Nucleotide-binding</keyword>
<dbReference type="EC" id="5.6.1.7" evidence="1"/>
<dbReference type="EMBL" id="CP001083">
    <property type="protein sequence ID" value="ACQ52812.1"/>
    <property type="molecule type" value="Genomic_DNA"/>
</dbReference>
<dbReference type="RefSeq" id="WP_003360385.1">
    <property type="nucleotide sequence ID" value="NC_012658.1"/>
</dbReference>
<dbReference type="SMR" id="C3KUC8"/>
<dbReference type="KEGG" id="cbi:CLJ_B3579"/>
<dbReference type="HOGENOM" id="CLU_016503_3_0_9"/>
<dbReference type="Proteomes" id="UP000002333">
    <property type="component" value="Chromosome"/>
</dbReference>
<dbReference type="GO" id="GO:0005737">
    <property type="term" value="C:cytoplasm"/>
    <property type="evidence" value="ECO:0007669"/>
    <property type="project" value="UniProtKB-SubCell"/>
</dbReference>
<dbReference type="GO" id="GO:0005524">
    <property type="term" value="F:ATP binding"/>
    <property type="evidence" value="ECO:0007669"/>
    <property type="project" value="UniProtKB-UniRule"/>
</dbReference>
<dbReference type="GO" id="GO:0140662">
    <property type="term" value="F:ATP-dependent protein folding chaperone"/>
    <property type="evidence" value="ECO:0007669"/>
    <property type="project" value="InterPro"/>
</dbReference>
<dbReference type="GO" id="GO:0016853">
    <property type="term" value="F:isomerase activity"/>
    <property type="evidence" value="ECO:0007669"/>
    <property type="project" value="UniProtKB-KW"/>
</dbReference>
<dbReference type="GO" id="GO:0051082">
    <property type="term" value="F:unfolded protein binding"/>
    <property type="evidence" value="ECO:0007669"/>
    <property type="project" value="UniProtKB-UniRule"/>
</dbReference>
<dbReference type="GO" id="GO:0042026">
    <property type="term" value="P:protein refolding"/>
    <property type="evidence" value="ECO:0007669"/>
    <property type="project" value="UniProtKB-UniRule"/>
</dbReference>
<dbReference type="CDD" id="cd03344">
    <property type="entry name" value="GroEL"/>
    <property type="match status" value="1"/>
</dbReference>
<dbReference type="FunFam" id="3.50.7.10:FF:000001">
    <property type="entry name" value="60 kDa chaperonin"/>
    <property type="match status" value="1"/>
</dbReference>
<dbReference type="Gene3D" id="3.50.7.10">
    <property type="entry name" value="GroEL"/>
    <property type="match status" value="1"/>
</dbReference>
<dbReference type="Gene3D" id="1.10.560.10">
    <property type="entry name" value="GroEL-like equatorial domain"/>
    <property type="match status" value="1"/>
</dbReference>
<dbReference type="Gene3D" id="3.30.260.10">
    <property type="entry name" value="TCP-1-like chaperonin intermediate domain"/>
    <property type="match status" value="1"/>
</dbReference>
<dbReference type="HAMAP" id="MF_00600">
    <property type="entry name" value="CH60"/>
    <property type="match status" value="1"/>
</dbReference>
<dbReference type="InterPro" id="IPR018370">
    <property type="entry name" value="Chaperonin_Cpn60_CS"/>
</dbReference>
<dbReference type="InterPro" id="IPR001844">
    <property type="entry name" value="Cpn60/GroEL"/>
</dbReference>
<dbReference type="InterPro" id="IPR002423">
    <property type="entry name" value="Cpn60/GroEL/TCP-1"/>
</dbReference>
<dbReference type="InterPro" id="IPR027409">
    <property type="entry name" value="GroEL-like_apical_dom_sf"/>
</dbReference>
<dbReference type="InterPro" id="IPR027413">
    <property type="entry name" value="GROEL-like_equatorial_sf"/>
</dbReference>
<dbReference type="InterPro" id="IPR027410">
    <property type="entry name" value="TCP-1-like_intermed_sf"/>
</dbReference>
<dbReference type="NCBIfam" id="TIGR02348">
    <property type="entry name" value="GroEL"/>
    <property type="match status" value="1"/>
</dbReference>
<dbReference type="NCBIfam" id="NF000592">
    <property type="entry name" value="PRK00013.1"/>
    <property type="match status" value="1"/>
</dbReference>
<dbReference type="NCBIfam" id="NF009487">
    <property type="entry name" value="PRK12849.1"/>
    <property type="match status" value="1"/>
</dbReference>
<dbReference type="NCBIfam" id="NF009488">
    <property type="entry name" value="PRK12850.1"/>
    <property type="match status" value="1"/>
</dbReference>
<dbReference type="NCBIfam" id="NF009489">
    <property type="entry name" value="PRK12851.1"/>
    <property type="match status" value="1"/>
</dbReference>
<dbReference type="PANTHER" id="PTHR45633">
    <property type="entry name" value="60 KDA HEAT SHOCK PROTEIN, MITOCHONDRIAL"/>
    <property type="match status" value="1"/>
</dbReference>
<dbReference type="Pfam" id="PF00118">
    <property type="entry name" value="Cpn60_TCP1"/>
    <property type="match status" value="1"/>
</dbReference>
<dbReference type="PRINTS" id="PR00298">
    <property type="entry name" value="CHAPERONIN60"/>
</dbReference>
<dbReference type="SUPFAM" id="SSF52029">
    <property type="entry name" value="GroEL apical domain-like"/>
    <property type="match status" value="1"/>
</dbReference>
<dbReference type="SUPFAM" id="SSF48592">
    <property type="entry name" value="GroEL equatorial domain-like"/>
    <property type="match status" value="1"/>
</dbReference>
<dbReference type="SUPFAM" id="SSF54849">
    <property type="entry name" value="GroEL-intermediate domain like"/>
    <property type="match status" value="1"/>
</dbReference>
<dbReference type="PROSITE" id="PS00296">
    <property type="entry name" value="CHAPERONINS_CPN60"/>
    <property type="match status" value="1"/>
</dbReference>
<gene>
    <name evidence="1" type="primary">groEL</name>
    <name evidence="1" type="synonym">groL</name>
    <name type="ordered locus">CLJ_B3579</name>
</gene>